<protein>
    <recommendedName>
        <fullName evidence="1">Protein ApaG</fullName>
    </recommendedName>
</protein>
<reference key="1">
    <citation type="journal article" date="2008" name="DNA Res.">
        <title>Complete genome sequence and comparative analysis of the wild-type commensal Escherichia coli strain SE11 isolated from a healthy adult.</title>
        <authorList>
            <person name="Oshima K."/>
            <person name="Toh H."/>
            <person name="Ogura Y."/>
            <person name="Sasamoto H."/>
            <person name="Morita H."/>
            <person name="Park S.-H."/>
            <person name="Ooka T."/>
            <person name="Iyoda S."/>
            <person name="Taylor T.D."/>
            <person name="Hayashi T."/>
            <person name="Itoh K."/>
            <person name="Hattori M."/>
        </authorList>
    </citation>
    <scope>NUCLEOTIDE SEQUENCE [LARGE SCALE GENOMIC DNA]</scope>
    <source>
        <strain>SE11</strain>
    </source>
</reference>
<organism>
    <name type="scientific">Escherichia coli (strain SE11)</name>
    <dbReference type="NCBI Taxonomy" id="409438"/>
    <lineage>
        <taxon>Bacteria</taxon>
        <taxon>Pseudomonadati</taxon>
        <taxon>Pseudomonadota</taxon>
        <taxon>Gammaproteobacteria</taxon>
        <taxon>Enterobacterales</taxon>
        <taxon>Enterobacteriaceae</taxon>
        <taxon>Escherichia</taxon>
    </lineage>
</organism>
<proteinExistence type="inferred from homology"/>
<name>APAG_ECOSE</name>
<evidence type="ECO:0000255" key="1">
    <source>
        <dbReference type="HAMAP-Rule" id="MF_00791"/>
    </source>
</evidence>
<accession>B6HZ31</accession>
<feature type="chain" id="PRO_1000133789" description="Protein ApaG">
    <location>
        <begin position="1"/>
        <end position="125"/>
    </location>
</feature>
<feature type="domain" description="ApaG" evidence="1">
    <location>
        <begin position="1"/>
        <end position="125"/>
    </location>
</feature>
<gene>
    <name evidence="1" type="primary">apaG</name>
    <name type="ordered locus">ECSE_0051</name>
</gene>
<dbReference type="EMBL" id="AP009240">
    <property type="protein sequence ID" value="BAG75575.1"/>
    <property type="molecule type" value="Genomic_DNA"/>
</dbReference>
<dbReference type="RefSeq" id="WP_000610901.1">
    <property type="nucleotide sequence ID" value="NC_011415.1"/>
</dbReference>
<dbReference type="SMR" id="B6HZ31"/>
<dbReference type="GeneID" id="93777385"/>
<dbReference type="KEGG" id="ecy:ECSE_0051"/>
<dbReference type="HOGENOM" id="CLU_128074_0_0_6"/>
<dbReference type="Proteomes" id="UP000008199">
    <property type="component" value="Chromosome"/>
</dbReference>
<dbReference type="GO" id="GO:0070987">
    <property type="term" value="P:error-free translesion synthesis"/>
    <property type="evidence" value="ECO:0007669"/>
    <property type="project" value="TreeGrafter"/>
</dbReference>
<dbReference type="Gene3D" id="2.60.40.1470">
    <property type="entry name" value="ApaG domain"/>
    <property type="match status" value="1"/>
</dbReference>
<dbReference type="HAMAP" id="MF_00791">
    <property type="entry name" value="ApaG"/>
    <property type="match status" value="1"/>
</dbReference>
<dbReference type="InterPro" id="IPR007474">
    <property type="entry name" value="ApaG_domain"/>
</dbReference>
<dbReference type="InterPro" id="IPR036767">
    <property type="entry name" value="ApaG_sf"/>
</dbReference>
<dbReference type="InterPro" id="IPR023065">
    <property type="entry name" value="Uncharacterised_ApaG"/>
</dbReference>
<dbReference type="NCBIfam" id="NF003967">
    <property type="entry name" value="PRK05461.1"/>
    <property type="match status" value="1"/>
</dbReference>
<dbReference type="PANTHER" id="PTHR14289">
    <property type="entry name" value="F-BOX ONLY PROTEIN 3"/>
    <property type="match status" value="1"/>
</dbReference>
<dbReference type="PANTHER" id="PTHR14289:SF16">
    <property type="entry name" value="POLYMERASE DELTA-INTERACTING PROTEIN 2"/>
    <property type="match status" value="1"/>
</dbReference>
<dbReference type="Pfam" id="PF04379">
    <property type="entry name" value="DUF525"/>
    <property type="match status" value="1"/>
</dbReference>
<dbReference type="SUPFAM" id="SSF110069">
    <property type="entry name" value="ApaG-like"/>
    <property type="match status" value="1"/>
</dbReference>
<dbReference type="PROSITE" id="PS51087">
    <property type="entry name" value="APAG"/>
    <property type="match status" value="1"/>
</dbReference>
<sequence length="125" mass="13867">MINSPRVCIQVQSVYIEAQSSPDNERYVFAYTVTIRNLGRAPVQLLGRYWLITNGNGRETEVQGEGVVGVQPLIAPGEEYQYTSGAIIETPLGTMQGHYEMIDENGVPFSIDIPVFRLAVPTLIH</sequence>